<feature type="chain" id="PRO_0000351411" description="PTS system glucoside-specific EIICBA component">
    <location>
        <begin position="1"/>
        <end position="688"/>
    </location>
</feature>
<feature type="transmembrane region" description="Helical" evidence="4">
    <location>
        <begin position="12"/>
        <end position="32"/>
    </location>
</feature>
<feature type="transmembrane region" description="Helical" evidence="4">
    <location>
        <begin position="81"/>
        <end position="101"/>
    </location>
</feature>
<feature type="transmembrane region" description="Helical" evidence="4">
    <location>
        <begin position="137"/>
        <end position="157"/>
    </location>
</feature>
<feature type="transmembrane region" description="Helical" evidence="4">
    <location>
        <begin position="182"/>
        <end position="202"/>
    </location>
</feature>
<feature type="transmembrane region" description="Helical" evidence="4">
    <location>
        <begin position="223"/>
        <end position="243"/>
    </location>
</feature>
<feature type="transmembrane region" description="Helical" evidence="4">
    <location>
        <begin position="284"/>
        <end position="304"/>
    </location>
</feature>
<feature type="transmembrane region" description="Helical" evidence="4">
    <location>
        <begin position="315"/>
        <end position="335"/>
    </location>
</feature>
<feature type="transmembrane region" description="Helical" evidence="4">
    <location>
        <begin position="340"/>
        <end position="360"/>
    </location>
</feature>
<feature type="transmembrane region" description="Helical" evidence="4">
    <location>
        <begin position="364"/>
        <end position="384"/>
    </location>
</feature>
<feature type="transmembrane region" description="Helical" evidence="4">
    <location>
        <begin position="395"/>
        <end position="415"/>
    </location>
</feature>
<feature type="domain" description="PTS EIIC type-1" evidence="4">
    <location>
        <begin position="3"/>
        <end position="427"/>
    </location>
</feature>
<feature type="domain" description="PTS EIIB type-1" evidence="3">
    <location>
        <begin position="438"/>
        <end position="519"/>
    </location>
</feature>
<feature type="domain" description="PTS EIIA type-1" evidence="2">
    <location>
        <begin position="560"/>
        <end position="664"/>
    </location>
</feature>
<feature type="active site" description="Phosphocysteine intermediate; for EIIB activity" evidence="3">
    <location>
        <position position="460"/>
    </location>
</feature>
<feature type="active site" description="Tele-phosphohistidine intermediate; for EIIA activity" evidence="2">
    <location>
        <position position="612"/>
    </location>
</feature>
<dbReference type="EC" id="2.7.1.-"/>
<dbReference type="EMBL" id="CP000046">
    <property type="protein sequence ID" value="AAW37328.1"/>
    <property type="molecule type" value="Genomic_DNA"/>
</dbReference>
<dbReference type="SMR" id="Q5HD13"/>
<dbReference type="KEGG" id="sac:SACOL2552"/>
<dbReference type="HOGENOM" id="CLU_012312_1_1_9"/>
<dbReference type="Proteomes" id="UP000000530">
    <property type="component" value="Chromosome"/>
</dbReference>
<dbReference type="GO" id="GO:0005886">
    <property type="term" value="C:plasma membrane"/>
    <property type="evidence" value="ECO:0007669"/>
    <property type="project" value="UniProtKB-SubCell"/>
</dbReference>
<dbReference type="GO" id="GO:0055056">
    <property type="term" value="F:D-glucose transmembrane transporter activity"/>
    <property type="evidence" value="ECO:0007669"/>
    <property type="project" value="InterPro"/>
</dbReference>
<dbReference type="GO" id="GO:0016301">
    <property type="term" value="F:kinase activity"/>
    <property type="evidence" value="ECO:0007669"/>
    <property type="project" value="UniProtKB-KW"/>
</dbReference>
<dbReference type="GO" id="GO:0008982">
    <property type="term" value="F:protein-N(PI)-phosphohistidine-sugar phosphotransferase activity"/>
    <property type="evidence" value="ECO:0007669"/>
    <property type="project" value="InterPro"/>
</dbReference>
<dbReference type="GO" id="GO:0090563">
    <property type="term" value="F:protein-phosphocysteine-sugar phosphotransferase activity"/>
    <property type="evidence" value="ECO:0007669"/>
    <property type="project" value="TreeGrafter"/>
</dbReference>
<dbReference type="GO" id="GO:1904659">
    <property type="term" value="P:D-glucose transmembrane transport"/>
    <property type="evidence" value="ECO:0007669"/>
    <property type="project" value="InterPro"/>
</dbReference>
<dbReference type="GO" id="GO:0009401">
    <property type="term" value="P:phosphoenolpyruvate-dependent sugar phosphotransferase system"/>
    <property type="evidence" value="ECO:0007669"/>
    <property type="project" value="UniProtKB-KW"/>
</dbReference>
<dbReference type="CDD" id="cd00212">
    <property type="entry name" value="PTS_IIB_glc"/>
    <property type="match status" value="1"/>
</dbReference>
<dbReference type="FunFam" id="2.70.70.10:FF:000001">
    <property type="entry name" value="PTS system glucose-specific IIA component"/>
    <property type="match status" value="1"/>
</dbReference>
<dbReference type="FunFam" id="3.30.1360.60:FF:000001">
    <property type="entry name" value="PTS system glucose-specific IIBC component PtsG"/>
    <property type="match status" value="1"/>
</dbReference>
<dbReference type="Gene3D" id="2.70.70.10">
    <property type="entry name" value="Glucose Permease (Domain IIA)"/>
    <property type="match status" value="1"/>
</dbReference>
<dbReference type="Gene3D" id="3.30.1360.60">
    <property type="entry name" value="Glucose permease domain IIB"/>
    <property type="match status" value="1"/>
</dbReference>
<dbReference type="InterPro" id="IPR011055">
    <property type="entry name" value="Dup_hybrid_motif"/>
</dbReference>
<dbReference type="InterPro" id="IPR036878">
    <property type="entry name" value="Glu_permease_IIB"/>
</dbReference>
<dbReference type="InterPro" id="IPR018113">
    <property type="entry name" value="PTrfase_EIIB_Cys"/>
</dbReference>
<dbReference type="InterPro" id="IPR001127">
    <property type="entry name" value="PTS_EIIA_1_perm"/>
</dbReference>
<dbReference type="InterPro" id="IPR003352">
    <property type="entry name" value="PTS_EIIC"/>
</dbReference>
<dbReference type="InterPro" id="IPR013013">
    <property type="entry name" value="PTS_EIIC_1"/>
</dbReference>
<dbReference type="InterPro" id="IPR050429">
    <property type="entry name" value="PTS_Glucose_EIICBA"/>
</dbReference>
<dbReference type="InterPro" id="IPR001996">
    <property type="entry name" value="PTS_IIB_1"/>
</dbReference>
<dbReference type="InterPro" id="IPR011299">
    <property type="entry name" value="PTS_IIBC_glc"/>
</dbReference>
<dbReference type="NCBIfam" id="TIGR00826">
    <property type="entry name" value="EIIB_glc"/>
    <property type="match status" value="1"/>
</dbReference>
<dbReference type="NCBIfam" id="TIGR00830">
    <property type="entry name" value="PTBA"/>
    <property type="match status" value="1"/>
</dbReference>
<dbReference type="NCBIfam" id="TIGR02002">
    <property type="entry name" value="PTS-II-BC-glcB"/>
    <property type="match status" value="1"/>
</dbReference>
<dbReference type="PANTHER" id="PTHR30009">
    <property type="entry name" value="CYTOCHROME C-TYPE SYNTHESIS PROTEIN AND PTS TRANSMEMBRANE COMPONENT"/>
    <property type="match status" value="1"/>
</dbReference>
<dbReference type="PANTHER" id="PTHR30009:SF20">
    <property type="entry name" value="PTS SYSTEM GLUCOSE-SPECIFIC EIICB COMPONENT-RELATED"/>
    <property type="match status" value="1"/>
</dbReference>
<dbReference type="Pfam" id="PF00358">
    <property type="entry name" value="PTS_EIIA_1"/>
    <property type="match status" value="1"/>
</dbReference>
<dbReference type="Pfam" id="PF00367">
    <property type="entry name" value="PTS_EIIB"/>
    <property type="match status" value="1"/>
</dbReference>
<dbReference type="Pfam" id="PF02378">
    <property type="entry name" value="PTS_EIIC"/>
    <property type="match status" value="1"/>
</dbReference>
<dbReference type="SUPFAM" id="SSF51261">
    <property type="entry name" value="Duplicated hybrid motif"/>
    <property type="match status" value="1"/>
</dbReference>
<dbReference type="SUPFAM" id="SSF55604">
    <property type="entry name" value="Glucose permease domain IIB"/>
    <property type="match status" value="1"/>
</dbReference>
<dbReference type="PROSITE" id="PS51093">
    <property type="entry name" value="PTS_EIIA_TYPE_1"/>
    <property type="match status" value="1"/>
</dbReference>
<dbReference type="PROSITE" id="PS00371">
    <property type="entry name" value="PTS_EIIA_TYPE_1_HIS"/>
    <property type="match status" value="1"/>
</dbReference>
<dbReference type="PROSITE" id="PS51098">
    <property type="entry name" value="PTS_EIIB_TYPE_1"/>
    <property type="match status" value="1"/>
</dbReference>
<dbReference type="PROSITE" id="PS01035">
    <property type="entry name" value="PTS_EIIB_TYPE_1_CYS"/>
    <property type="match status" value="1"/>
</dbReference>
<dbReference type="PROSITE" id="PS51103">
    <property type="entry name" value="PTS_EIIC_TYPE_1"/>
    <property type="match status" value="1"/>
</dbReference>
<keyword id="KW-1003">Cell membrane</keyword>
<keyword id="KW-0418">Kinase</keyword>
<keyword id="KW-0472">Membrane</keyword>
<keyword id="KW-0598">Phosphotransferase system</keyword>
<keyword id="KW-0762">Sugar transport</keyword>
<keyword id="KW-0808">Transferase</keyword>
<keyword id="KW-0812">Transmembrane</keyword>
<keyword id="KW-1133">Transmembrane helix</keyword>
<keyword id="KW-0813">Transport</keyword>
<evidence type="ECO:0000250" key="1"/>
<evidence type="ECO:0000255" key="2">
    <source>
        <dbReference type="PROSITE-ProRule" id="PRU00416"/>
    </source>
</evidence>
<evidence type="ECO:0000255" key="3">
    <source>
        <dbReference type="PROSITE-ProRule" id="PRU00421"/>
    </source>
</evidence>
<evidence type="ECO:0000255" key="4">
    <source>
        <dbReference type="PROSITE-ProRule" id="PRU00426"/>
    </source>
</evidence>
<reference key="1">
    <citation type="journal article" date="2005" name="J. Bacteriol.">
        <title>Insights on evolution of virulence and resistance from the complete genome analysis of an early methicillin-resistant Staphylococcus aureus strain and a biofilm-producing methicillin-resistant Staphylococcus epidermidis strain.</title>
        <authorList>
            <person name="Gill S.R."/>
            <person name="Fouts D.E."/>
            <person name="Archer G.L."/>
            <person name="Mongodin E.F."/>
            <person name="DeBoy R.T."/>
            <person name="Ravel J."/>
            <person name="Paulsen I.T."/>
            <person name="Kolonay J.F."/>
            <person name="Brinkac L.M."/>
            <person name="Beanan M.J."/>
            <person name="Dodson R.J."/>
            <person name="Daugherty S.C."/>
            <person name="Madupu R."/>
            <person name="Angiuoli S.V."/>
            <person name="Durkin A.S."/>
            <person name="Haft D.H."/>
            <person name="Vamathevan J.J."/>
            <person name="Khouri H."/>
            <person name="Utterback T.R."/>
            <person name="Lee C."/>
            <person name="Dimitrov G."/>
            <person name="Jiang L."/>
            <person name="Qin H."/>
            <person name="Weidman J."/>
            <person name="Tran K."/>
            <person name="Kang K.H."/>
            <person name="Hance I.R."/>
            <person name="Nelson K.E."/>
            <person name="Fraser C.M."/>
        </authorList>
    </citation>
    <scope>NUCLEOTIDE SEQUENCE [LARGE SCALE GENOMIC DNA]</scope>
    <source>
        <strain>COL</strain>
    </source>
</reference>
<organism>
    <name type="scientific">Staphylococcus aureus (strain COL)</name>
    <dbReference type="NCBI Taxonomy" id="93062"/>
    <lineage>
        <taxon>Bacteria</taxon>
        <taxon>Bacillati</taxon>
        <taxon>Bacillota</taxon>
        <taxon>Bacilli</taxon>
        <taxon>Bacillales</taxon>
        <taxon>Staphylococcaceae</taxon>
        <taxon>Staphylococcus</taxon>
    </lineage>
</organism>
<protein>
    <recommendedName>
        <fullName>PTS system glucoside-specific EIICBA component</fullName>
    </recommendedName>
    <domain>
        <recommendedName>
            <fullName>Glucoside permease IIC component</fullName>
        </recommendedName>
        <alternativeName>
            <fullName>PTS system glucoside-specific EIIC component</fullName>
        </alternativeName>
    </domain>
    <domain>
        <recommendedName>
            <fullName>Glucoside-specific phosphotransferase enzyme IIB component</fullName>
            <ecNumber>2.7.1.-</ecNumber>
        </recommendedName>
        <alternativeName>
            <fullName>PTS system glucoside-specific EIIB component</fullName>
        </alternativeName>
    </domain>
    <domain>
        <recommendedName>
            <fullName>Glucoside-specific phosphotransferase enzyme IIA component</fullName>
        </recommendedName>
        <alternativeName>
            <fullName>PTS system glucoside-specific EIIA component</fullName>
        </alternativeName>
    </domain>
</protein>
<sequence length="688" mass="74416">MFKKLFGQLQRIGKALMLPVAILPAAGILLAFGNAMHNEQLVEIAPWLKNDIIVMISSVMEAAGQVVFDNLPLLFAVGTALGLAGGDGVAALAALVGYLIMNATMGKVLHITIDDIFSYAKGAKELSQAAKEPAHALVLGIPTLQTGVFGGIIMGALAAWCYNKFYNITLPPFLGFFAGKRFVPIVTSVVAIATGVLLSFAWPPIQDGLNSLSNFLLNKNLTLTTFIFGIIERSLIPFGLHHIFYSPFWFEFGSYTNHAGELVRGDQRIWMAQLKDGVPFTAGAFTTGKYPFMMFGLPAAAFAIYKNARPERKKVVGGLMLSAGLTAFLTGITEPLEFSFLFVAPVLYGIHVLLAGTSFLVMHLLGVKIGMTFSGGFIDYILYGLLNWDRSHALLVIPVGIVYAIVYYFLFDFAIRKFKLKTPGREDEETEIRNSSVAKLPFDVLDAMGGKENIKHLDACITRLRVEVVDKSKVDVAGIKALGASGVLEVGNNMQAIFGPKSDQIKHDMAKIMSGEITKPSETTVTEEMSDEPVHVEALGTTDIYAPGIGQIIPLSEVPDQVFAGKMMGDGVGFIPEKGEIVAPFDGTVKTIFPTKHAIGLESESGVEVLIHIGIDTVKLNGEGFESLINVDEKVTQGQPLMKVNLAYLKAHAPSIVTPMIITNLENKELVIEDVQDADPGKLIMTVK</sequence>
<proteinExistence type="inferred from homology"/>
<name>PTU3C_STAAC</name>
<gene>
    <name type="primary">glcB</name>
    <name type="ordered locus">SACOL2552</name>
</gene>
<accession>Q5HD13</accession>
<comment type="function">
    <text evidence="1">The phosphoenolpyruvate-dependent sugar phosphotransferase system (sugar PTS), a major carbohydrate active -transport system, catalyzes the phosphorylation of incoming sugar substrates concomitantly with their translocation across the cell membrane. This system is involved in alpha- and beta-glucoside transport (By similarity).</text>
</comment>
<comment type="subcellular location">
    <subcellularLocation>
        <location evidence="4">Cell membrane</location>
        <topology evidence="4">Multi-pass membrane protein</topology>
    </subcellularLocation>
</comment>
<comment type="domain">
    <text>The EIIC domain forms the PTS system translocation channel and contains the specific substrate-binding site.</text>
</comment>
<comment type="domain">
    <text>The EIIB domain is phosphorylated by phospho-EIIA on a cysteinyl or histidyl residue, depending on the transported sugar. Then, it transfers the phosphoryl group to the sugar substrate concomitantly with the sugar uptake processed by the EIIC domain.</text>
</comment>
<comment type="domain">
    <text>The EIIA domain is phosphorylated by phospho-HPr on a histidyl residue. Then, it transfers the phosphoryl group to the EIIB domain.</text>
</comment>